<accession>Q8YP69</accession>
<organism>
    <name type="scientific">Nostoc sp. (strain PCC 7120 / SAG 25.82 / UTEX 2576)</name>
    <dbReference type="NCBI Taxonomy" id="103690"/>
    <lineage>
        <taxon>Bacteria</taxon>
        <taxon>Bacillati</taxon>
        <taxon>Cyanobacteriota</taxon>
        <taxon>Cyanophyceae</taxon>
        <taxon>Nostocales</taxon>
        <taxon>Nostocaceae</taxon>
        <taxon>Nostoc</taxon>
    </lineage>
</organism>
<evidence type="ECO:0000250" key="1">
    <source>
        <dbReference type="UniProtKB" id="P21513"/>
    </source>
</evidence>
<evidence type="ECO:0000250" key="2">
    <source>
        <dbReference type="UniProtKB" id="P72656"/>
    </source>
</evidence>
<evidence type="ECO:0000255" key="3">
    <source>
        <dbReference type="PROSITE-ProRule" id="PRU00180"/>
    </source>
</evidence>
<evidence type="ECO:0000256" key="4">
    <source>
        <dbReference type="SAM" id="MobiDB-lite"/>
    </source>
</evidence>
<evidence type="ECO:0000269" key="5">
    <source>
    </source>
</evidence>
<evidence type="ECO:0000303" key="6">
    <source>
    </source>
</evidence>
<evidence type="ECO:0000305" key="7"/>
<gene>
    <name evidence="6" type="primary">rne</name>
    <name type="ordered locus">alr4331</name>
</gene>
<protein>
    <recommendedName>
        <fullName evidence="6">Ribonuclease E</fullName>
        <shortName evidence="6">AnaRne</shortName>
        <shortName>RNase E</shortName>
        <ecNumber>3.1.26.12</ecNumber>
    </recommendedName>
</protein>
<keyword id="KW-0963">Cytoplasm</keyword>
<keyword id="KW-0255">Endonuclease</keyword>
<keyword id="KW-0378">Hydrolase</keyword>
<keyword id="KW-0460">Magnesium</keyword>
<keyword id="KW-0479">Metal-binding</keyword>
<keyword id="KW-0540">Nuclease</keyword>
<keyword id="KW-1185">Reference proteome</keyword>
<keyword id="KW-0694">RNA-binding</keyword>
<keyword id="KW-0698">rRNA processing</keyword>
<keyword id="KW-0699">rRNA-binding</keyword>
<keyword id="KW-0819">tRNA processing</keyword>
<keyword id="KW-0820">tRNA-binding</keyword>
<keyword id="KW-0862">Zinc</keyword>
<comment type="function">
    <text evidence="5">Endoribonuclease that plays a central role in rRNA and tRNA processing and mRNA decay. Has been shown to act on 9S rRNA (the precursor of 5S rRNA).</text>
</comment>
<comment type="catalytic activity">
    <reaction evidence="2">
        <text>Endonucleolytic cleavage of single-stranded RNA in A- and U-rich regions.</text>
        <dbReference type="EC" id="3.1.26.12"/>
    </reaction>
</comment>
<comment type="cofactor">
    <cofactor evidence="1">
        <name>Mg(2+)</name>
        <dbReference type="ChEBI" id="CHEBI:18420"/>
    </cofactor>
    <text evidence="1">Binds 1 Mg(2+) ion per subunit.</text>
</comment>
<comment type="cofactor">
    <cofactor evidence="1">
        <name>Zn(2+)</name>
        <dbReference type="ChEBI" id="CHEBI:29105"/>
    </cofactor>
    <text evidence="1">Binds 2 Zn(2+) ions per homotetramer. Zinc ions are bound between subunits.</text>
</comment>
<comment type="subunit">
    <text evidence="1 5">May form homodimers or higher order multimers. Interacts with polynucleotide phosphorylase (PNPase, pnp) via the C4 Arg-rich motif (residues 670-678) (PubMed:24563514). A homotetramer formed by a dimer of dimers (By similarity).</text>
</comment>
<comment type="subcellular location">
    <subcellularLocation>
        <location evidence="2">Cytoplasm</location>
    </subcellularLocation>
</comment>
<comment type="similarity">
    <text evidence="7">Belongs to the RNase E/G family.</text>
</comment>
<name>RNE_NOSS1</name>
<feature type="chain" id="PRO_0000450522" description="Ribonuclease E">
    <location>
        <begin position="1"/>
        <end position="687"/>
    </location>
</feature>
<feature type="domain" description="S1 motif" evidence="3">
    <location>
        <begin position="35"/>
        <end position="117"/>
    </location>
</feature>
<feature type="region of interest" description="Disordered" evidence="4">
    <location>
        <begin position="650"/>
        <end position="687"/>
    </location>
</feature>
<feature type="short sequence motif" description="C4 Arg-rich motif, necessary and sufficient to confer PNPase binding on another protein" evidence="5">
    <location>
        <begin position="670"/>
        <end position="678"/>
    </location>
</feature>
<feature type="binding site" evidence="1">
    <location>
        <position position="296"/>
    </location>
    <ligand>
        <name>Mg(2+)</name>
        <dbReference type="ChEBI" id="CHEBI:18420"/>
        <note>catalytic</note>
    </ligand>
</feature>
<feature type="binding site" evidence="1">
    <location>
        <position position="339"/>
    </location>
    <ligand>
        <name>Mg(2+)</name>
        <dbReference type="ChEBI" id="CHEBI:18420"/>
        <note>catalytic</note>
    </ligand>
</feature>
<feature type="binding site" evidence="1">
    <location>
        <position position="397"/>
    </location>
    <ligand>
        <name>Zn(2+)</name>
        <dbReference type="ChEBI" id="CHEBI:29105"/>
        <note>ligand shared between dimeric partners</note>
    </ligand>
</feature>
<feature type="binding site" evidence="1">
    <location>
        <position position="400"/>
    </location>
    <ligand>
        <name>Zn(2+)</name>
        <dbReference type="ChEBI" id="CHEBI:29105"/>
        <note>ligand shared between dimeric partners</note>
    </ligand>
</feature>
<feature type="mutagenesis site" description="No longer interacts with PNPase." evidence="5">
    <location>
        <begin position="670"/>
        <end position="678"/>
    </location>
</feature>
<sequence length="687" mass="76169">MPKQIIIAEQHQIAAVFSEDQIQELVVATGHHQIGDIYLGVVENVLPGIDAAFVNIGDPERNGFIHVTDLGPLRLKRTAAAITELLAPQQKVLVQVMKEPTGTKGPRLTGNITLPGRYVVLMPYGRGVNLSRRIKSESERNRLRALAILIKPAGMGLLVRTEAEGKPEEAIIEDLEVLQKQWEAIQQEAQSTRAPALLNRDDDFIQRVLRDMYGADVNRIVVDSSTGLKRVKQYLQNWSGGQTPQGLLIDHHRDRSPILEYFRINAAIREALKPRVDLPSGGYIIIEPTEALTVIDVNSGSFTRSATARETVLWTNCEAATEIARQLRLRNIAGVIVVDFIDMESRRDQLQVLEHFNKALRADKARPQIAQLTELGLVELTRKRQGQNIYELFGDTCPACGGLGHTVRLPGETENRLPTPAAEVPERFVSLPTREPRLPTARTTEPRETYDGFGEAFENDSDLGALNLINHPSYQELNDNNKRRARTRRSRIGINGTNGKDEQRITANPLAFISESDLDLDGDVELSAPPELPTPNLGKSGWIERAERTKVIKTEPVKPVVEPPEIRTVEMTPEEQDIFALMGISPLIKLEQEVKNPKSVIINIVQPGQTPTIPTEITPEPVAKVTPSVEVNTPKVKLESKSVSVAATEPIKLTETMEESEVNAASTANRRRRRRSSASDSDTGEDS</sequence>
<dbReference type="EC" id="3.1.26.12"/>
<dbReference type="EMBL" id="BA000019">
    <property type="protein sequence ID" value="BAB76030.1"/>
    <property type="molecule type" value="Genomic_DNA"/>
</dbReference>
<dbReference type="PIR" id="AD2347">
    <property type="entry name" value="AD2347"/>
</dbReference>
<dbReference type="RefSeq" id="WP_010998469.1">
    <property type="nucleotide sequence ID" value="NZ_RSCN01000027.1"/>
</dbReference>
<dbReference type="SMR" id="Q8YP69"/>
<dbReference type="STRING" id="103690.gene:10496380"/>
<dbReference type="KEGG" id="ana:alr4331"/>
<dbReference type="eggNOG" id="COG1530">
    <property type="taxonomic scope" value="Bacteria"/>
</dbReference>
<dbReference type="OrthoDB" id="9804278at2"/>
<dbReference type="Proteomes" id="UP000002483">
    <property type="component" value="Chromosome"/>
</dbReference>
<dbReference type="GO" id="GO:0005737">
    <property type="term" value="C:cytoplasm"/>
    <property type="evidence" value="ECO:0007669"/>
    <property type="project" value="UniProtKB-SubCell"/>
</dbReference>
<dbReference type="GO" id="GO:0004519">
    <property type="term" value="F:endonuclease activity"/>
    <property type="evidence" value="ECO:0007669"/>
    <property type="project" value="UniProtKB-KW"/>
</dbReference>
<dbReference type="GO" id="GO:0046872">
    <property type="term" value="F:metal ion binding"/>
    <property type="evidence" value="ECO:0007669"/>
    <property type="project" value="UniProtKB-KW"/>
</dbReference>
<dbReference type="GO" id="GO:0004540">
    <property type="term" value="F:RNA nuclease activity"/>
    <property type="evidence" value="ECO:0007669"/>
    <property type="project" value="InterPro"/>
</dbReference>
<dbReference type="GO" id="GO:0019843">
    <property type="term" value="F:rRNA binding"/>
    <property type="evidence" value="ECO:0007669"/>
    <property type="project" value="UniProtKB-KW"/>
</dbReference>
<dbReference type="GO" id="GO:0000049">
    <property type="term" value="F:tRNA binding"/>
    <property type="evidence" value="ECO:0007669"/>
    <property type="project" value="UniProtKB-KW"/>
</dbReference>
<dbReference type="GO" id="GO:0006364">
    <property type="term" value="P:rRNA processing"/>
    <property type="evidence" value="ECO:0007669"/>
    <property type="project" value="UniProtKB-KW"/>
</dbReference>
<dbReference type="GO" id="GO:0008033">
    <property type="term" value="P:tRNA processing"/>
    <property type="evidence" value="ECO:0007669"/>
    <property type="project" value="UniProtKB-KW"/>
</dbReference>
<dbReference type="CDD" id="cd04453">
    <property type="entry name" value="S1_RNase_E"/>
    <property type="match status" value="1"/>
</dbReference>
<dbReference type="Gene3D" id="2.40.50.140">
    <property type="entry name" value="Nucleic acid-binding proteins"/>
    <property type="match status" value="1"/>
</dbReference>
<dbReference type="InterPro" id="IPR012340">
    <property type="entry name" value="NA-bd_OB-fold"/>
</dbReference>
<dbReference type="InterPro" id="IPR019307">
    <property type="entry name" value="RNA-bd_AU-1/RNase_E/G"/>
</dbReference>
<dbReference type="InterPro" id="IPR004659">
    <property type="entry name" value="RNase_E/G"/>
</dbReference>
<dbReference type="InterPro" id="IPR003029">
    <property type="entry name" value="S1_domain"/>
</dbReference>
<dbReference type="NCBIfam" id="TIGR00757">
    <property type="entry name" value="RNaseEG"/>
    <property type="match status" value="1"/>
</dbReference>
<dbReference type="PANTHER" id="PTHR30001">
    <property type="entry name" value="RIBONUCLEASE"/>
    <property type="match status" value="1"/>
</dbReference>
<dbReference type="PANTHER" id="PTHR30001:SF0">
    <property type="entry name" value="RIBONUCLEASE G"/>
    <property type="match status" value="1"/>
</dbReference>
<dbReference type="Pfam" id="PF10150">
    <property type="entry name" value="RNase_E_G"/>
    <property type="match status" value="1"/>
</dbReference>
<dbReference type="SMART" id="SM00316">
    <property type="entry name" value="S1"/>
    <property type="match status" value="1"/>
</dbReference>
<dbReference type="SUPFAM" id="SSF50249">
    <property type="entry name" value="Nucleic acid-binding proteins"/>
    <property type="match status" value="1"/>
</dbReference>
<dbReference type="PROSITE" id="PS50126">
    <property type="entry name" value="S1"/>
    <property type="match status" value="1"/>
</dbReference>
<proteinExistence type="evidence at protein level"/>
<reference key="1">
    <citation type="journal article" date="2001" name="DNA Res.">
        <title>Complete genomic sequence of the filamentous nitrogen-fixing cyanobacterium Anabaena sp. strain PCC 7120.</title>
        <authorList>
            <person name="Kaneko T."/>
            <person name="Nakamura Y."/>
            <person name="Wolk C.P."/>
            <person name="Kuritz T."/>
            <person name="Sasamoto S."/>
            <person name="Watanabe A."/>
            <person name="Iriguchi M."/>
            <person name="Ishikawa A."/>
            <person name="Kawashima K."/>
            <person name="Kimura T."/>
            <person name="Kishida Y."/>
            <person name="Kohara M."/>
            <person name="Matsumoto M."/>
            <person name="Matsuno A."/>
            <person name="Muraki A."/>
            <person name="Nakazaki N."/>
            <person name="Shimpo S."/>
            <person name="Sugimoto M."/>
            <person name="Takazawa M."/>
            <person name="Yamada M."/>
            <person name="Yasuda M."/>
            <person name="Tabata S."/>
        </authorList>
    </citation>
    <scope>NUCLEOTIDE SEQUENCE [LARGE SCALE GENOMIC DNA]</scope>
    <source>
        <strain>PCC 7120 / SAG 25.82 / UTEX 2576</strain>
    </source>
</reference>
<reference key="2">
    <citation type="journal article" date="2014" name="RNA">
        <title>RNase E forms a complex with polynucleotide phosphorylase in cyanobacteria via a cyanobacterial-specific nonapeptide in the noncatalytic region.</title>
        <authorList>
            <person name="Zhang J.Y."/>
            <person name="Deng X.M."/>
            <person name="Li F.P."/>
            <person name="Wang L."/>
            <person name="Huang Q.Y."/>
            <person name="Zhang C.C."/>
            <person name="Chen W.L."/>
        </authorList>
    </citation>
    <scope>FUNCTION AS AN ENDONUCLEASE</scope>
    <scope>SUBUNIT</scope>
    <scope>DOMAIN</scope>
    <scope>MUTAGENESIS OF 670-ARG--ALA-678</scope>
    <source>
        <strain>PCC 7120 / SAG 25.82 / UTEX 2576</strain>
    </source>
</reference>